<accession>P23297</accession>
<accession>B2R5D9</accession>
<accession>Q5T7Y3</accession>
<reference key="1">
    <citation type="journal article" date="1992" name="Biochemistry">
        <title>S100 alpha, CAPL, and CACY: molecular cloning and expression analysis of three calcium-binding proteins from human heart.</title>
        <authorList>
            <person name="Engelkamp D."/>
            <person name="Schaefer B.W."/>
            <person name="Erne P."/>
            <person name="Heizmann C.W."/>
        </authorList>
    </citation>
    <scope>NUCLEOTIDE SEQUENCE [MRNA]</scope>
    <scope>TISSUE SPECIFICITY</scope>
    <source>
        <tissue>Heart</tissue>
    </source>
</reference>
<reference key="2">
    <citation type="journal article" date="2004" name="Nat. Genet.">
        <title>Complete sequencing and characterization of 21,243 full-length human cDNAs.</title>
        <authorList>
            <person name="Ota T."/>
            <person name="Suzuki Y."/>
            <person name="Nishikawa T."/>
            <person name="Otsuki T."/>
            <person name="Sugiyama T."/>
            <person name="Irie R."/>
            <person name="Wakamatsu A."/>
            <person name="Hayashi K."/>
            <person name="Sato H."/>
            <person name="Nagai K."/>
            <person name="Kimura K."/>
            <person name="Makita H."/>
            <person name="Sekine M."/>
            <person name="Obayashi M."/>
            <person name="Nishi T."/>
            <person name="Shibahara T."/>
            <person name="Tanaka T."/>
            <person name="Ishii S."/>
            <person name="Yamamoto J."/>
            <person name="Saito K."/>
            <person name="Kawai Y."/>
            <person name="Isono Y."/>
            <person name="Nakamura Y."/>
            <person name="Nagahari K."/>
            <person name="Murakami K."/>
            <person name="Yasuda T."/>
            <person name="Iwayanagi T."/>
            <person name="Wagatsuma M."/>
            <person name="Shiratori A."/>
            <person name="Sudo H."/>
            <person name="Hosoiri T."/>
            <person name="Kaku Y."/>
            <person name="Kodaira H."/>
            <person name="Kondo H."/>
            <person name="Sugawara M."/>
            <person name="Takahashi M."/>
            <person name="Kanda K."/>
            <person name="Yokoi T."/>
            <person name="Furuya T."/>
            <person name="Kikkawa E."/>
            <person name="Omura Y."/>
            <person name="Abe K."/>
            <person name="Kamihara K."/>
            <person name="Katsuta N."/>
            <person name="Sato K."/>
            <person name="Tanikawa M."/>
            <person name="Yamazaki M."/>
            <person name="Ninomiya K."/>
            <person name="Ishibashi T."/>
            <person name="Yamashita H."/>
            <person name="Murakawa K."/>
            <person name="Fujimori K."/>
            <person name="Tanai H."/>
            <person name="Kimata M."/>
            <person name="Watanabe M."/>
            <person name="Hiraoka S."/>
            <person name="Chiba Y."/>
            <person name="Ishida S."/>
            <person name="Ono Y."/>
            <person name="Takiguchi S."/>
            <person name="Watanabe S."/>
            <person name="Yosida M."/>
            <person name="Hotuta T."/>
            <person name="Kusano J."/>
            <person name="Kanehori K."/>
            <person name="Takahashi-Fujii A."/>
            <person name="Hara H."/>
            <person name="Tanase T.-O."/>
            <person name="Nomura Y."/>
            <person name="Togiya S."/>
            <person name="Komai F."/>
            <person name="Hara R."/>
            <person name="Takeuchi K."/>
            <person name="Arita M."/>
            <person name="Imose N."/>
            <person name="Musashino K."/>
            <person name="Yuuki H."/>
            <person name="Oshima A."/>
            <person name="Sasaki N."/>
            <person name="Aotsuka S."/>
            <person name="Yoshikawa Y."/>
            <person name="Matsunawa H."/>
            <person name="Ichihara T."/>
            <person name="Shiohata N."/>
            <person name="Sano S."/>
            <person name="Moriya S."/>
            <person name="Momiyama H."/>
            <person name="Satoh N."/>
            <person name="Takami S."/>
            <person name="Terashima Y."/>
            <person name="Suzuki O."/>
            <person name="Nakagawa S."/>
            <person name="Senoh A."/>
            <person name="Mizoguchi H."/>
            <person name="Goto Y."/>
            <person name="Shimizu F."/>
            <person name="Wakebe H."/>
            <person name="Hishigaki H."/>
            <person name="Watanabe T."/>
            <person name="Sugiyama A."/>
            <person name="Takemoto M."/>
            <person name="Kawakami B."/>
            <person name="Yamazaki M."/>
            <person name="Watanabe K."/>
            <person name="Kumagai A."/>
            <person name="Itakura S."/>
            <person name="Fukuzumi Y."/>
            <person name="Fujimori Y."/>
            <person name="Komiyama M."/>
            <person name="Tashiro H."/>
            <person name="Tanigami A."/>
            <person name="Fujiwara T."/>
            <person name="Ono T."/>
            <person name="Yamada K."/>
            <person name="Fujii Y."/>
            <person name="Ozaki K."/>
            <person name="Hirao M."/>
            <person name="Ohmori Y."/>
            <person name="Kawabata A."/>
            <person name="Hikiji T."/>
            <person name="Kobatake N."/>
            <person name="Inagaki H."/>
            <person name="Ikema Y."/>
            <person name="Okamoto S."/>
            <person name="Okitani R."/>
            <person name="Kawakami T."/>
            <person name="Noguchi S."/>
            <person name="Itoh T."/>
            <person name="Shigeta K."/>
            <person name="Senba T."/>
            <person name="Matsumura K."/>
            <person name="Nakajima Y."/>
            <person name="Mizuno T."/>
            <person name="Morinaga M."/>
            <person name="Sasaki M."/>
            <person name="Togashi T."/>
            <person name="Oyama M."/>
            <person name="Hata H."/>
            <person name="Watanabe M."/>
            <person name="Komatsu T."/>
            <person name="Mizushima-Sugano J."/>
            <person name="Satoh T."/>
            <person name="Shirai Y."/>
            <person name="Takahashi Y."/>
            <person name="Nakagawa K."/>
            <person name="Okumura K."/>
            <person name="Nagase T."/>
            <person name="Nomura N."/>
            <person name="Kikuchi H."/>
            <person name="Masuho Y."/>
            <person name="Yamashita R."/>
            <person name="Nakai K."/>
            <person name="Yada T."/>
            <person name="Nakamura Y."/>
            <person name="Ohara O."/>
            <person name="Isogai T."/>
            <person name="Sugano S."/>
        </authorList>
    </citation>
    <scope>NUCLEOTIDE SEQUENCE [LARGE SCALE MRNA]</scope>
    <source>
        <tissue>Caudate nucleus</tissue>
    </source>
</reference>
<reference key="3">
    <citation type="submission" date="2004-10" db="EMBL/GenBank/DDBJ databases">
        <title>Cloning of human full-length CDSs in BD Creator(TM) system donor vector.</title>
        <authorList>
            <person name="Kalnine N."/>
            <person name="Chen X."/>
            <person name="Rolfs A."/>
            <person name="Halleck A."/>
            <person name="Hines L."/>
            <person name="Eisenstein S."/>
            <person name="Koundinya M."/>
            <person name="Raphael J."/>
            <person name="Moreira D."/>
            <person name="Kelley T."/>
            <person name="LaBaer J."/>
            <person name="Lin Y."/>
            <person name="Phelan M."/>
            <person name="Farmer A."/>
        </authorList>
    </citation>
    <scope>NUCLEOTIDE SEQUENCE [LARGE SCALE MRNA]</scope>
</reference>
<reference key="4">
    <citation type="journal article" date="2008" name="Nat. Methods">
        <title>Human protein factory for converting the transcriptome into an in vitro-expressed proteome.</title>
        <authorList>
            <person name="Goshima N."/>
            <person name="Kawamura Y."/>
            <person name="Fukumoto A."/>
            <person name="Miura A."/>
            <person name="Honma R."/>
            <person name="Satoh R."/>
            <person name="Wakamatsu A."/>
            <person name="Yamamoto J."/>
            <person name="Kimura K."/>
            <person name="Nishikawa T."/>
            <person name="Andoh T."/>
            <person name="Iida Y."/>
            <person name="Ishikawa K."/>
            <person name="Ito E."/>
            <person name="Kagawa N."/>
            <person name="Kaminaga C."/>
            <person name="Kanehori K."/>
            <person name="Kawakami B."/>
            <person name="Kenmochi K."/>
            <person name="Kimura R."/>
            <person name="Kobayashi M."/>
            <person name="Kuroita T."/>
            <person name="Kuwayama H."/>
            <person name="Maruyama Y."/>
            <person name="Matsuo K."/>
            <person name="Minami K."/>
            <person name="Mitsubori M."/>
            <person name="Mori M."/>
            <person name="Morishita R."/>
            <person name="Murase A."/>
            <person name="Nishikawa A."/>
            <person name="Nishikawa S."/>
            <person name="Okamoto T."/>
            <person name="Sakagami N."/>
            <person name="Sakamoto Y."/>
            <person name="Sasaki Y."/>
            <person name="Seki T."/>
            <person name="Sono S."/>
            <person name="Sugiyama A."/>
            <person name="Sumiya T."/>
            <person name="Takayama T."/>
            <person name="Takayama Y."/>
            <person name="Takeda H."/>
            <person name="Togashi T."/>
            <person name="Yahata K."/>
            <person name="Yamada H."/>
            <person name="Yanagisawa Y."/>
            <person name="Endo Y."/>
            <person name="Imamoto F."/>
            <person name="Kisu Y."/>
            <person name="Tanaka S."/>
            <person name="Isogai T."/>
            <person name="Imai J."/>
            <person name="Watanabe S."/>
            <person name="Nomura N."/>
        </authorList>
    </citation>
    <scope>NUCLEOTIDE SEQUENCE [LARGE SCALE MRNA]</scope>
</reference>
<reference key="5">
    <citation type="journal article" date="2006" name="Nature">
        <title>The DNA sequence and biological annotation of human chromosome 1.</title>
        <authorList>
            <person name="Gregory S.G."/>
            <person name="Barlow K.F."/>
            <person name="McLay K.E."/>
            <person name="Kaul R."/>
            <person name="Swarbreck D."/>
            <person name="Dunham A."/>
            <person name="Scott C.E."/>
            <person name="Howe K.L."/>
            <person name="Woodfine K."/>
            <person name="Spencer C.C.A."/>
            <person name="Jones M.C."/>
            <person name="Gillson C."/>
            <person name="Searle S."/>
            <person name="Zhou Y."/>
            <person name="Kokocinski F."/>
            <person name="McDonald L."/>
            <person name="Evans R."/>
            <person name="Phillips K."/>
            <person name="Atkinson A."/>
            <person name="Cooper R."/>
            <person name="Jones C."/>
            <person name="Hall R.E."/>
            <person name="Andrews T.D."/>
            <person name="Lloyd C."/>
            <person name="Ainscough R."/>
            <person name="Almeida J.P."/>
            <person name="Ambrose K.D."/>
            <person name="Anderson F."/>
            <person name="Andrew R.W."/>
            <person name="Ashwell R.I.S."/>
            <person name="Aubin K."/>
            <person name="Babbage A.K."/>
            <person name="Bagguley C.L."/>
            <person name="Bailey J."/>
            <person name="Beasley H."/>
            <person name="Bethel G."/>
            <person name="Bird C.P."/>
            <person name="Bray-Allen S."/>
            <person name="Brown J.Y."/>
            <person name="Brown A.J."/>
            <person name="Buckley D."/>
            <person name="Burton J."/>
            <person name="Bye J."/>
            <person name="Carder C."/>
            <person name="Chapman J.C."/>
            <person name="Clark S.Y."/>
            <person name="Clarke G."/>
            <person name="Clee C."/>
            <person name="Cobley V."/>
            <person name="Collier R.E."/>
            <person name="Corby N."/>
            <person name="Coville G.J."/>
            <person name="Davies J."/>
            <person name="Deadman R."/>
            <person name="Dunn M."/>
            <person name="Earthrowl M."/>
            <person name="Ellington A.G."/>
            <person name="Errington H."/>
            <person name="Frankish A."/>
            <person name="Frankland J."/>
            <person name="French L."/>
            <person name="Garner P."/>
            <person name="Garnett J."/>
            <person name="Gay L."/>
            <person name="Ghori M.R.J."/>
            <person name="Gibson R."/>
            <person name="Gilby L.M."/>
            <person name="Gillett W."/>
            <person name="Glithero R.J."/>
            <person name="Grafham D.V."/>
            <person name="Griffiths C."/>
            <person name="Griffiths-Jones S."/>
            <person name="Grocock R."/>
            <person name="Hammond S."/>
            <person name="Harrison E.S.I."/>
            <person name="Hart E."/>
            <person name="Haugen E."/>
            <person name="Heath P.D."/>
            <person name="Holmes S."/>
            <person name="Holt K."/>
            <person name="Howden P.J."/>
            <person name="Hunt A.R."/>
            <person name="Hunt S.E."/>
            <person name="Hunter G."/>
            <person name="Isherwood J."/>
            <person name="James R."/>
            <person name="Johnson C."/>
            <person name="Johnson D."/>
            <person name="Joy A."/>
            <person name="Kay M."/>
            <person name="Kershaw J.K."/>
            <person name="Kibukawa M."/>
            <person name="Kimberley A.M."/>
            <person name="King A."/>
            <person name="Knights A.J."/>
            <person name="Lad H."/>
            <person name="Laird G."/>
            <person name="Lawlor S."/>
            <person name="Leongamornlert D.A."/>
            <person name="Lloyd D.M."/>
            <person name="Loveland J."/>
            <person name="Lovell J."/>
            <person name="Lush M.J."/>
            <person name="Lyne R."/>
            <person name="Martin S."/>
            <person name="Mashreghi-Mohammadi M."/>
            <person name="Matthews L."/>
            <person name="Matthews N.S.W."/>
            <person name="McLaren S."/>
            <person name="Milne S."/>
            <person name="Mistry S."/>
            <person name="Moore M.J.F."/>
            <person name="Nickerson T."/>
            <person name="O'Dell C.N."/>
            <person name="Oliver K."/>
            <person name="Palmeiri A."/>
            <person name="Palmer S.A."/>
            <person name="Parker A."/>
            <person name="Patel D."/>
            <person name="Pearce A.V."/>
            <person name="Peck A.I."/>
            <person name="Pelan S."/>
            <person name="Phelps K."/>
            <person name="Phillimore B.J."/>
            <person name="Plumb R."/>
            <person name="Rajan J."/>
            <person name="Raymond C."/>
            <person name="Rouse G."/>
            <person name="Saenphimmachak C."/>
            <person name="Sehra H.K."/>
            <person name="Sheridan E."/>
            <person name="Shownkeen R."/>
            <person name="Sims S."/>
            <person name="Skuce C.D."/>
            <person name="Smith M."/>
            <person name="Steward C."/>
            <person name="Subramanian S."/>
            <person name="Sycamore N."/>
            <person name="Tracey A."/>
            <person name="Tromans A."/>
            <person name="Van Helmond Z."/>
            <person name="Wall M."/>
            <person name="Wallis J.M."/>
            <person name="White S."/>
            <person name="Whitehead S.L."/>
            <person name="Wilkinson J.E."/>
            <person name="Willey D.L."/>
            <person name="Williams H."/>
            <person name="Wilming L."/>
            <person name="Wray P.W."/>
            <person name="Wu Z."/>
            <person name="Coulson A."/>
            <person name="Vaudin M."/>
            <person name="Sulston J.E."/>
            <person name="Durbin R.M."/>
            <person name="Hubbard T."/>
            <person name="Wooster R."/>
            <person name="Dunham I."/>
            <person name="Carter N.P."/>
            <person name="McVean G."/>
            <person name="Ross M.T."/>
            <person name="Harrow J."/>
            <person name="Olson M.V."/>
            <person name="Beck S."/>
            <person name="Rogers J."/>
            <person name="Bentley D.R."/>
        </authorList>
    </citation>
    <scope>NUCLEOTIDE SEQUENCE [LARGE SCALE GENOMIC DNA]</scope>
</reference>
<reference key="6">
    <citation type="submission" date="2005-09" db="EMBL/GenBank/DDBJ databases">
        <authorList>
            <person name="Mural R.J."/>
            <person name="Istrail S."/>
            <person name="Sutton G."/>
            <person name="Florea L."/>
            <person name="Halpern A.L."/>
            <person name="Mobarry C.M."/>
            <person name="Lippert R."/>
            <person name="Walenz B."/>
            <person name="Shatkay H."/>
            <person name="Dew I."/>
            <person name="Miller J.R."/>
            <person name="Flanigan M.J."/>
            <person name="Edwards N.J."/>
            <person name="Bolanos R."/>
            <person name="Fasulo D."/>
            <person name="Halldorsson B.V."/>
            <person name="Hannenhalli S."/>
            <person name="Turner R."/>
            <person name="Yooseph S."/>
            <person name="Lu F."/>
            <person name="Nusskern D.R."/>
            <person name="Shue B.C."/>
            <person name="Zheng X.H."/>
            <person name="Zhong F."/>
            <person name="Delcher A.L."/>
            <person name="Huson D.H."/>
            <person name="Kravitz S.A."/>
            <person name="Mouchard L."/>
            <person name="Reinert K."/>
            <person name="Remington K.A."/>
            <person name="Clark A.G."/>
            <person name="Waterman M.S."/>
            <person name="Eichler E.E."/>
            <person name="Adams M.D."/>
            <person name="Hunkapiller M.W."/>
            <person name="Myers E.W."/>
            <person name="Venter J.C."/>
        </authorList>
    </citation>
    <scope>NUCLEOTIDE SEQUENCE [LARGE SCALE GENOMIC DNA]</scope>
</reference>
<reference key="7">
    <citation type="journal article" date="2004" name="Genome Res.">
        <title>The status, quality, and expansion of the NIH full-length cDNA project: the Mammalian Gene Collection (MGC).</title>
        <authorList>
            <consortium name="The MGC Project Team"/>
        </authorList>
    </citation>
    <scope>NUCLEOTIDE SEQUENCE [LARGE SCALE MRNA]</scope>
    <source>
        <tissue>Skin</tissue>
    </source>
</reference>
<reference key="8">
    <citation type="journal article" date="2001" name="Proc. Natl. Acad. Sci. U.S.A.">
        <title>S100A1: a regulator of myocardial contractility.</title>
        <authorList>
            <person name="Most P."/>
            <person name="Bernotat J."/>
            <person name="Ehlermann P."/>
            <person name="Pleger S.T."/>
            <person name="Reppel M."/>
            <person name="Boerries M."/>
            <person name="Niroomand F."/>
            <person name="Pieske B."/>
            <person name="Janssen P.M."/>
            <person name="Eschenhagen T."/>
            <person name="Karczewski P."/>
            <person name="Smith G.L."/>
            <person name="Koch W.J."/>
            <person name="Katus H.A."/>
            <person name="Remppis A."/>
        </authorList>
    </citation>
    <scope>FUNCTION</scope>
</reference>
<reference key="9">
    <citation type="journal article" date="2002" name="J. Biol. Chem.">
        <title>CacyBP/SIP, a calcyclin and Siah-1-interacting protein, binds EF-hand proteins of the S100 family.</title>
        <authorList>
            <person name="Filipek A."/>
            <person name="Jastrzebska B."/>
            <person name="Nowotny M."/>
            <person name="Kuznicki J."/>
        </authorList>
    </citation>
    <scope>INTERACTION WITH CACYBP</scope>
</reference>
<reference key="10">
    <citation type="journal article" date="2003" name="Biochem. Biophys. Res. Commun.">
        <title>Ca2+ -dependent interaction of S100A1 with the sarcoplasmic reticulum Ca2+ -ATPase2a and phospholamban in the human heart.</title>
        <authorList>
            <person name="Kiewitz R."/>
            <person name="Acklin C."/>
            <person name="Schaefer B.W."/>
            <person name="Maco B."/>
            <person name="Uhrik B."/>
            <person name="Wuytack F."/>
            <person name="Erne P."/>
            <person name="Heizmann C.W."/>
        </authorList>
    </citation>
    <scope>FUNCTION</scope>
    <scope>INTERACTION WITH ATP2A2 AND PLN</scope>
    <scope>SUBCELLULAR LOCATION</scope>
    <scope>TISSUE SPECIFICITY</scope>
</reference>
<reference key="11">
    <citation type="journal article" date="2004" name="Biochem. J.">
        <title>Heterodimeric interaction and interfaces of S100A1 and S100P.</title>
        <authorList>
            <person name="Wang G."/>
            <person name="Zhang S."/>
            <person name="Fernig D.G."/>
            <person name="Spiller D."/>
            <person name="Martin-Fernandez M."/>
            <person name="Zhang H."/>
            <person name="Ding Y."/>
            <person name="Rao Z."/>
            <person name="Rudland P.S."/>
            <person name="Barraclough R."/>
        </authorList>
    </citation>
    <scope>INTERACTION WITH S100P</scope>
    <scope>SUBCELLULAR LOCATION</scope>
</reference>
<reference key="12">
    <citation type="journal article" date="2005" name="FEBS J.">
        <title>Affinity of S100A1 protein for calcium increases dramatically upon glutathionylation.</title>
        <authorList>
            <person name="Goch G."/>
            <person name="Vdovenko S."/>
            <person name="Kozlowska H."/>
            <person name="Bierzynski A."/>
        </authorList>
    </citation>
    <scope>GLUTATHIONYLATION</scope>
</reference>
<reference key="13">
    <citation type="journal article" date="2008" name="J. Biol. Chem.">
        <title>S100A1 and calmodulin compete for the same binding site on ryanodine receptor.</title>
        <authorList>
            <person name="Wright N.T."/>
            <person name="Prosser B.L."/>
            <person name="Varney K.M."/>
            <person name="Zimmer D.B."/>
            <person name="Schneider M.F."/>
            <person name="Weber D.J."/>
        </authorList>
    </citation>
    <scope>INTERACTION WITH RYR1 AND RYR2</scope>
</reference>
<reference key="14">
    <citation type="journal article" date="2010" name="FEBS Lett.">
        <title>S100 proteins regulate the interaction of Hsp90 with cyclophilin 40 and FKBP52 through their tetratricopeptide repeats.</title>
        <authorList>
            <person name="Shimamoto S."/>
            <person name="Kubota Y."/>
            <person name="Tokumitsu H."/>
            <person name="Kobayashi R."/>
        </authorList>
    </citation>
    <scope>INTERACTION WITH FKBP4</scope>
</reference>
<reference key="15">
    <citation type="journal article" date="2011" name="BMC Syst. Biol.">
        <title>Initial characterization of the human central proteome.</title>
        <authorList>
            <person name="Burkard T.R."/>
            <person name="Planyavsky M."/>
            <person name="Kaupe I."/>
            <person name="Breitwieser F.P."/>
            <person name="Buerckstuemmer T."/>
            <person name="Bennett K.L."/>
            <person name="Superti-Furga G."/>
            <person name="Colinge J."/>
        </authorList>
    </citation>
    <scope>IDENTIFICATION BY MASS SPECTROMETRY [LARGE SCALE ANALYSIS]</scope>
</reference>
<reference key="16">
    <citation type="journal article" date="2012" name="J. Biol. Chem.">
        <title>S100 proteins modulate protein phosphatase 5 function: a link between CA2+ signal transduction and protein dephosphorylation.</title>
        <authorList>
            <person name="Yamaguchi F."/>
            <person name="Umeda Y."/>
            <person name="Shimamoto S."/>
            <person name="Tsuchiya M."/>
            <person name="Tokumitsu H."/>
            <person name="Tokuda M."/>
            <person name="Kobayashi R."/>
        </authorList>
    </citation>
    <scope>FUNCTION</scope>
    <scope>INTERACTION WITH PPP5C</scope>
</reference>
<reference key="17">
    <citation type="journal article" date="2011" name="J. Struct. Biol.">
        <title>Solution NMR structure and dynamics of human apo-S100A1 protein.</title>
        <authorList>
            <person name="Nowakowski M."/>
            <person name="Jaremko L."/>
            <person name="Jaremko M."/>
            <person name="Zhukov I."/>
            <person name="Belczyk A."/>
            <person name="Bierzynski A."/>
            <person name="Ejchart A."/>
        </authorList>
    </citation>
    <scope>STRUCTURE BY NMR</scope>
    <scope>SUBUNIT</scope>
</reference>
<reference key="18">
    <citation type="journal article" date="2012" name="J. Biol. Chem.">
        <title>Post-translational S-nitrosylation is an endogenous factor fine tuning the properties of human S100A1 protein.</title>
        <authorList>
            <person name="Lenarcic Zivkovic M."/>
            <person name="Zareba-Koziol M."/>
            <person name="Zhukova L."/>
            <person name="Poznanski J."/>
            <person name="Zhukov I."/>
            <person name="Wyslouch-Cieszynska A."/>
        </authorList>
    </citation>
    <scope>STRUCTURE BY NMR OF 2-94</scope>
    <scope>S-NITROSYLATION AT CYS-86</scope>
</reference>
<reference key="19">
    <citation type="journal article" date="2013" name="Biochemistry">
        <title>Impact of calcium binding and thionylation of S100A1 protein on its nuclear magnetic resonance-derived structure and backbone dynamics.</title>
        <authorList>
            <person name="Nowakowski M."/>
            <person name="Ruszczynska-Bartnik K."/>
            <person name="Budzinska M."/>
            <person name="Jaremko L."/>
            <person name="Jaremko M."/>
            <person name="Zdanowski K."/>
            <person name="Bierzynski A."/>
            <person name="Ejchart A."/>
        </authorList>
    </citation>
    <scope>STRUCTURE BY NMR OF 2-94 IN COMPLEX WITH CALCIUM</scope>
    <scope>FUNCTION</scope>
</reference>
<reference evidence="19" key="20">
    <citation type="journal article" date="2017" name="Acta Crystallogr. F">
        <title>X-ray crystal structure of human calcium-bound S100A1.</title>
        <authorList>
            <person name="Melville Z."/>
            <person name="Aligholizadeh E."/>
            <person name="McKnight L.E."/>
            <person name="Weber D.J."/>
            <person name="Pozharski E."/>
            <person name="Weber D.J."/>
        </authorList>
    </citation>
    <scope>X-RAY CRYSTALLOGRAPHY (2.25 ANGSTROMS) IN COMPLEX WITH CALCIUM</scope>
</reference>
<organism>
    <name type="scientific">Homo sapiens</name>
    <name type="common">Human</name>
    <dbReference type="NCBI Taxonomy" id="9606"/>
    <lineage>
        <taxon>Eukaryota</taxon>
        <taxon>Metazoa</taxon>
        <taxon>Chordata</taxon>
        <taxon>Craniata</taxon>
        <taxon>Vertebrata</taxon>
        <taxon>Euteleostomi</taxon>
        <taxon>Mammalia</taxon>
        <taxon>Eutheria</taxon>
        <taxon>Euarchontoglires</taxon>
        <taxon>Primates</taxon>
        <taxon>Haplorrhini</taxon>
        <taxon>Catarrhini</taxon>
        <taxon>Hominidae</taxon>
        <taxon>Homo</taxon>
    </lineage>
</organism>
<gene>
    <name type="primary">S100A1</name>
    <name type="synonym">S100A</name>
</gene>
<dbReference type="EMBL" id="X58079">
    <property type="protein sequence ID" value="CAA41107.1"/>
    <property type="molecule type" value="mRNA"/>
</dbReference>
<dbReference type="EMBL" id="AK312152">
    <property type="protein sequence ID" value="BAG35086.1"/>
    <property type="molecule type" value="mRNA"/>
</dbReference>
<dbReference type="EMBL" id="BT006938">
    <property type="protein sequence ID" value="AAP35584.1"/>
    <property type="molecule type" value="mRNA"/>
</dbReference>
<dbReference type="EMBL" id="AB451316">
    <property type="protein sequence ID" value="BAG70130.1"/>
    <property type="molecule type" value="mRNA"/>
</dbReference>
<dbReference type="EMBL" id="AB451446">
    <property type="protein sequence ID" value="BAG70260.1"/>
    <property type="molecule type" value="mRNA"/>
</dbReference>
<dbReference type="EMBL" id="AL162258">
    <property type="status" value="NOT_ANNOTATED_CDS"/>
    <property type="molecule type" value="Genomic_DNA"/>
</dbReference>
<dbReference type="EMBL" id="CH471121">
    <property type="protein sequence ID" value="EAW53302.1"/>
    <property type="molecule type" value="Genomic_DNA"/>
</dbReference>
<dbReference type="EMBL" id="BC014392">
    <property type="protein sequence ID" value="AAH14392.1"/>
    <property type="molecule type" value="mRNA"/>
</dbReference>
<dbReference type="CCDS" id="CCDS1047.1"/>
<dbReference type="PIR" id="A44470">
    <property type="entry name" value="BCHUIA"/>
</dbReference>
<dbReference type="RefSeq" id="NP_006262.1">
    <property type="nucleotide sequence ID" value="NM_006271.2"/>
</dbReference>
<dbReference type="PDB" id="2L0P">
    <property type="method" value="NMR"/>
    <property type="chains" value="A/B=1-94"/>
</dbReference>
<dbReference type="PDB" id="2LHL">
    <property type="method" value="NMR"/>
    <property type="chains" value="A/B=2-94"/>
</dbReference>
<dbReference type="PDB" id="2LLS">
    <property type="method" value="NMR"/>
    <property type="chains" value="A/B=2-94"/>
</dbReference>
<dbReference type="PDB" id="2LLT">
    <property type="method" value="NMR"/>
    <property type="chains" value="A/B=2-94"/>
</dbReference>
<dbReference type="PDB" id="2LLU">
    <property type="method" value="NMR"/>
    <property type="chains" value="A/B=2-94"/>
</dbReference>
<dbReference type="PDB" id="2LP2">
    <property type="method" value="NMR"/>
    <property type="chains" value="A/B=2-94"/>
</dbReference>
<dbReference type="PDB" id="2LP3">
    <property type="method" value="NMR"/>
    <property type="chains" value="A/B=2-94"/>
</dbReference>
<dbReference type="PDB" id="2LUX">
    <property type="method" value="NMR"/>
    <property type="chains" value="A/B=2-94"/>
</dbReference>
<dbReference type="PDB" id="2M3W">
    <property type="method" value="NMR"/>
    <property type="chains" value="A/B=2-94"/>
</dbReference>
<dbReference type="PDB" id="5K89">
    <property type="method" value="X-ray"/>
    <property type="resolution" value="2.25 A"/>
    <property type="chains" value="A/C/H=1-94"/>
</dbReference>
<dbReference type="PDBsum" id="2L0P"/>
<dbReference type="PDBsum" id="2LHL"/>
<dbReference type="PDBsum" id="2LLS"/>
<dbReference type="PDBsum" id="2LLT"/>
<dbReference type="PDBsum" id="2LLU"/>
<dbReference type="PDBsum" id="2LP2"/>
<dbReference type="PDBsum" id="2LP3"/>
<dbReference type="PDBsum" id="2LUX"/>
<dbReference type="PDBsum" id="2M3W"/>
<dbReference type="PDBsum" id="5K89"/>
<dbReference type="BMRB" id="P23297"/>
<dbReference type="SMR" id="P23297"/>
<dbReference type="BioGRID" id="112179">
    <property type="interactions" value="33"/>
</dbReference>
<dbReference type="FunCoup" id="P23297">
    <property type="interactions" value="426"/>
</dbReference>
<dbReference type="IntAct" id="P23297">
    <property type="interactions" value="24"/>
</dbReference>
<dbReference type="MINT" id="P23297"/>
<dbReference type="STRING" id="9606.ENSP00000292169"/>
<dbReference type="DrugBank" id="DB00768">
    <property type="generic name" value="Olopatadine"/>
</dbReference>
<dbReference type="TCDB" id="8.A.81.1.1">
    <property type="family name" value="the s100 calcium-binding protein (s100) family"/>
</dbReference>
<dbReference type="GlyGen" id="P23297">
    <property type="glycosylation" value="1 site"/>
</dbReference>
<dbReference type="iPTMnet" id="P23297"/>
<dbReference type="PhosphoSitePlus" id="P23297"/>
<dbReference type="BioMuta" id="S100A1"/>
<dbReference type="DMDM" id="134136"/>
<dbReference type="CPTAC" id="CPTAC-1452"/>
<dbReference type="jPOST" id="P23297"/>
<dbReference type="MassIVE" id="P23297"/>
<dbReference type="PaxDb" id="9606-ENSP00000292169"/>
<dbReference type="PeptideAtlas" id="P23297"/>
<dbReference type="ProteomicsDB" id="54079"/>
<dbReference type="Antibodypedia" id="1674">
    <property type="antibodies" value="1177 antibodies from 44 providers"/>
</dbReference>
<dbReference type="DNASU" id="6271"/>
<dbReference type="Ensembl" id="ENST00000292169.6">
    <property type="protein sequence ID" value="ENSP00000292169.2"/>
    <property type="gene ID" value="ENSG00000160678.12"/>
</dbReference>
<dbReference type="GeneID" id="6271"/>
<dbReference type="KEGG" id="hsa:6271"/>
<dbReference type="MANE-Select" id="ENST00000292169.6">
    <property type="protein sequence ID" value="ENSP00000292169.2"/>
    <property type="RefSeq nucleotide sequence ID" value="NM_006271.2"/>
    <property type="RefSeq protein sequence ID" value="NP_006262.1"/>
</dbReference>
<dbReference type="UCSC" id="uc001fck.1">
    <property type="organism name" value="human"/>
</dbReference>
<dbReference type="AGR" id="HGNC:10486"/>
<dbReference type="CTD" id="6271"/>
<dbReference type="DisGeNET" id="6271"/>
<dbReference type="GeneCards" id="S100A1"/>
<dbReference type="HGNC" id="HGNC:10486">
    <property type="gene designation" value="S100A1"/>
</dbReference>
<dbReference type="HPA" id="ENSG00000160678">
    <property type="expression patterns" value="Tissue enhanced (heart muscle, skeletal muscle, tongue)"/>
</dbReference>
<dbReference type="MIM" id="176940">
    <property type="type" value="gene"/>
</dbReference>
<dbReference type="neXtProt" id="NX_P23297"/>
<dbReference type="OpenTargets" id="ENSG00000160678"/>
<dbReference type="PharmGKB" id="PA34898"/>
<dbReference type="VEuPathDB" id="HostDB:ENSG00000160678"/>
<dbReference type="eggNOG" id="ENOG502SSF0">
    <property type="taxonomic scope" value="Eukaryota"/>
</dbReference>
<dbReference type="GeneTree" id="ENSGT00940000160475"/>
<dbReference type="HOGENOM" id="CLU_138624_2_1_1"/>
<dbReference type="InParanoid" id="P23297"/>
<dbReference type="OMA" id="ACNSFFW"/>
<dbReference type="OrthoDB" id="26525at2759"/>
<dbReference type="PAN-GO" id="P23297">
    <property type="GO annotations" value="5 GO annotations based on evolutionary models"/>
</dbReference>
<dbReference type="PhylomeDB" id="P23297"/>
<dbReference type="TreeFam" id="TF332727"/>
<dbReference type="PathwayCommons" id="P23297"/>
<dbReference type="Reactome" id="R-HSA-1236974">
    <property type="pathway name" value="ER-Phagosome pathway"/>
</dbReference>
<dbReference type="Reactome" id="R-HSA-166058">
    <property type="pathway name" value="MyD88:MAL(TIRAP) cascade initiated on plasma membrane"/>
</dbReference>
<dbReference type="Reactome" id="R-HSA-5602498">
    <property type="pathway name" value="MyD88 deficiency (TLR2/4)"/>
</dbReference>
<dbReference type="Reactome" id="R-HSA-5603041">
    <property type="pathway name" value="IRAK4 deficiency (TLR2/4)"/>
</dbReference>
<dbReference type="Reactome" id="R-HSA-5686938">
    <property type="pathway name" value="Regulation of TLR by endogenous ligand"/>
</dbReference>
<dbReference type="SignaLink" id="P23297"/>
<dbReference type="BioGRID-ORCS" id="6271">
    <property type="hits" value="13 hits in 1158 CRISPR screens"/>
</dbReference>
<dbReference type="CD-CODE" id="8C2F96ED">
    <property type="entry name" value="Centrosome"/>
</dbReference>
<dbReference type="ChiTaRS" id="S100A1">
    <property type="organism name" value="human"/>
</dbReference>
<dbReference type="EvolutionaryTrace" id="P23297"/>
<dbReference type="GeneWiki" id="S100_calcium-binding_protein_A1"/>
<dbReference type="GenomeRNAi" id="6271"/>
<dbReference type="Pharos" id="P23297">
    <property type="development level" value="Tbio"/>
</dbReference>
<dbReference type="PRO" id="PR:P23297"/>
<dbReference type="Proteomes" id="UP000005640">
    <property type="component" value="Chromosome 1"/>
</dbReference>
<dbReference type="RNAct" id="P23297">
    <property type="molecule type" value="protein"/>
</dbReference>
<dbReference type="Bgee" id="ENSG00000160678">
    <property type="expression patterns" value="Expressed in apex of heart and 158 other cell types or tissues"/>
</dbReference>
<dbReference type="ExpressionAtlas" id="P23297">
    <property type="expression patterns" value="baseline and differential"/>
</dbReference>
<dbReference type="GO" id="GO:0005737">
    <property type="term" value="C:cytoplasm"/>
    <property type="evidence" value="ECO:0000318"/>
    <property type="project" value="GO_Central"/>
</dbReference>
<dbReference type="GO" id="GO:0005829">
    <property type="term" value="C:cytosol"/>
    <property type="evidence" value="ECO:0000314"/>
    <property type="project" value="HPA"/>
</dbReference>
<dbReference type="GO" id="GO:0005576">
    <property type="term" value="C:extracellular region"/>
    <property type="evidence" value="ECO:0000304"/>
    <property type="project" value="Reactome"/>
</dbReference>
<dbReference type="GO" id="GO:0005794">
    <property type="term" value="C:Golgi apparatus"/>
    <property type="evidence" value="ECO:0000314"/>
    <property type="project" value="HPA"/>
</dbReference>
<dbReference type="GO" id="GO:0031430">
    <property type="term" value="C:M band"/>
    <property type="evidence" value="ECO:0007669"/>
    <property type="project" value="Ensembl"/>
</dbReference>
<dbReference type="GO" id="GO:0005739">
    <property type="term" value="C:mitochondrion"/>
    <property type="evidence" value="ECO:0007669"/>
    <property type="project" value="UniProtKB-SubCell"/>
</dbReference>
<dbReference type="GO" id="GO:0005654">
    <property type="term" value="C:nucleoplasm"/>
    <property type="evidence" value="ECO:0000314"/>
    <property type="project" value="HPA"/>
</dbReference>
<dbReference type="GO" id="GO:0005634">
    <property type="term" value="C:nucleus"/>
    <property type="evidence" value="ECO:0000314"/>
    <property type="project" value="UniProtKB"/>
</dbReference>
<dbReference type="GO" id="GO:0032991">
    <property type="term" value="C:protein-containing complex"/>
    <property type="evidence" value="ECO:0000303"/>
    <property type="project" value="UniProtKB"/>
</dbReference>
<dbReference type="GO" id="GO:0016529">
    <property type="term" value="C:sarcoplasmic reticulum"/>
    <property type="evidence" value="ECO:0000314"/>
    <property type="project" value="UniProtKB"/>
</dbReference>
<dbReference type="GO" id="GO:0030018">
    <property type="term" value="C:Z disc"/>
    <property type="evidence" value="ECO:0007669"/>
    <property type="project" value="Ensembl"/>
</dbReference>
<dbReference type="GO" id="GO:0051117">
    <property type="term" value="F:ATPase binding"/>
    <property type="evidence" value="ECO:0000353"/>
    <property type="project" value="UniProtKB"/>
</dbReference>
<dbReference type="GO" id="GO:0005509">
    <property type="term" value="F:calcium ion binding"/>
    <property type="evidence" value="ECO:0000318"/>
    <property type="project" value="GO_Central"/>
</dbReference>
<dbReference type="GO" id="GO:0048306">
    <property type="term" value="F:calcium-dependent protein binding"/>
    <property type="evidence" value="ECO:0000318"/>
    <property type="project" value="GO_Central"/>
</dbReference>
<dbReference type="GO" id="GO:0042802">
    <property type="term" value="F:identical protein binding"/>
    <property type="evidence" value="ECO:0000353"/>
    <property type="project" value="IntAct"/>
</dbReference>
<dbReference type="GO" id="GO:0042803">
    <property type="term" value="F:protein homodimerization activity"/>
    <property type="evidence" value="ECO:0000314"/>
    <property type="project" value="UniProtKB"/>
</dbReference>
<dbReference type="GO" id="GO:0044548">
    <property type="term" value="F:S100 protein binding"/>
    <property type="evidence" value="ECO:0000353"/>
    <property type="project" value="UniProtKB"/>
</dbReference>
<dbReference type="GO" id="GO:0035556">
    <property type="term" value="P:intracellular signal transduction"/>
    <property type="evidence" value="ECO:0000303"/>
    <property type="project" value="UniProtKB"/>
</dbReference>
<dbReference type="GO" id="GO:0000122">
    <property type="term" value="P:negative regulation of transcription by RNA polymerase II"/>
    <property type="evidence" value="ECO:0007669"/>
    <property type="project" value="Ensembl"/>
</dbReference>
<dbReference type="GO" id="GO:1903672">
    <property type="term" value="P:positive regulation of sprouting angiogenesis"/>
    <property type="evidence" value="ECO:0000314"/>
    <property type="project" value="BHF-UCL"/>
</dbReference>
<dbReference type="GO" id="GO:0008016">
    <property type="term" value="P:regulation of heart contraction"/>
    <property type="evidence" value="ECO:0000303"/>
    <property type="project" value="UniProtKB"/>
</dbReference>
<dbReference type="GO" id="GO:0021762">
    <property type="term" value="P:substantia nigra development"/>
    <property type="evidence" value="ECO:0007007"/>
    <property type="project" value="UniProtKB"/>
</dbReference>
<dbReference type="GO" id="GO:0042311">
    <property type="term" value="P:vasodilation"/>
    <property type="evidence" value="ECO:0000314"/>
    <property type="project" value="BHF-UCL"/>
</dbReference>
<dbReference type="CDD" id="cd05025">
    <property type="entry name" value="S-100A1"/>
    <property type="match status" value="1"/>
</dbReference>
<dbReference type="FunFam" id="1.10.238.10:FF:000044">
    <property type="entry name" value="Protein S100"/>
    <property type="match status" value="1"/>
</dbReference>
<dbReference type="Gene3D" id="1.10.238.10">
    <property type="entry name" value="EF-hand"/>
    <property type="match status" value="1"/>
</dbReference>
<dbReference type="InterPro" id="IPR011992">
    <property type="entry name" value="EF-hand-dom_pair"/>
</dbReference>
<dbReference type="InterPro" id="IPR018247">
    <property type="entry name" value="EF_Hand_1_Ca_BS"/>
</dbReference>
<dbReference type="InterPro" id="IPR002048">
    <property type="entry name" value="EF_hand_dom"/>
</dbReference>
<dbReference type="InterPro" id="IPR028486">
    <property type="entry name" value="S100-A1"/>
</dbReference>
<dbReference type="InterPro" id="IPR001751">
    <property type="entry name" value="S100/CaBP7/8-like_CS"/>
</dbReference>
<dbReference type="InterPro" id="IPR013787">
    <property type="entry name" value="S100_Ca-bd_sub"/>
</dbReference>
<dbReference type="PANTHER" id="PTHR11639:SF134">
    <property type="entry name" value="PROTEIN S100-A1-RELATED"/>
    <property type="match status" value="1"/>
</dbReference>
<dbReference type="PANTHER" id="PTHR11639">
    <property type="entry name" value="S100 CALCIUM-BINDING PROTEIN"/>
    <property type="match status" value="1"/>
</dbReference>
<dbReference type="Pfam" id="PF00036">
    <property type="entry name" value="EF-hand_1"/>
    <property type="match status" value="1"/>
</dbReference>
<dbReference type="Pfam" id="PF01023">
    <property type="entry name" value="S_100"/>
    <property type="match status" value="1"/>
</dbReference>
<dbReference type="SMART" id="SM00054">
    <property type="entry name" value="EFh"/>
    <property type="match status" value="1"/>
</dbReference>
<dbReference type="SMART" id="SM01394">
    <property type="entry name" value="S_100"/>
    <property type="match status" value="1"/>
</dbReference>
<dbReference type="SUPFAM" id="SSF47473">
    <property type="entry name" value="EF-hand"/>
    <property type="match status" value="1"/>
</dbReference>
<dbReference type="PROSITE" id="PS00018">
    <property type="entry name" value="EF_HAND_1"/>
    <property type="match status" value="1"/>
</dbReference>
<dbReference type="PROSITE" id="PS50222">
    <property type="entry name" value="EF_HAND_2"/>
    <property type="match status" value="1"/>
</dbReference>
<dbReference type="PROSITE" id="PS00303">
    <property type="entry name" value="S100_CABP"/>
    <property type="match status" value="1"/>
</dbReference>
<sequence>MGSELETAMETLINVFHAHSGKEGDKYKLSKKELKELLQTELSGFLDAQKDVDAVDKVMKELDENGDGEVDFQEYVVLVAALTVACNNFFWENS</sequence>
<evidence type="ECO:0000250" key="1">
    <source>
        <dbReference type="UniProtKB" id="P02639"/>
    </source>
</evidence>
<evidence type="ECO:0000250" key="2">
    <source>
        <dbReference type="UniProtKB" id="P35467"/>
    </source>
</evidence>
<evidence type="ECO:0000250" key="3">
    <source>
        <dbReference type="UniProtKB" id="P56565"/>
    </source>
</evidence>
<evidence type="ECO:0000255" key="4">
    <source>
        <dbReference type="PROSITE-ProRule" id="PRU00448"/>
    </source>
</evidence>
<evidence type="ECO:0000269" key="5">
    <source>
    </source>
</evidence>
<evidence type="ECO:0000269" key="6">
    <source>
    </source>
</evidence>
<evidence type="ECO:0000269" key="7">
    <source>
    </source>
</evidence>
<evidence type="ECO:0000269" key="8">
    <source>
    </source>
</evidence>
<evidence type="ECO:0000269" key="9">
    <source>
    </source>
</evidence>
<evidence type="ECO:0000269" key="10">
    <source>
    </source>
</evidence>
<evidence type="ECO:0000269" key="11">
    <source>
    </source>
</evidence>
<evidence type="ECO:0000269" key="12">
    <source>
    </source>
</evidence>
<evidence type="ECO:0000269" key="13">
    <source>
    </source>
</evidence>
<evidence type="ECO:0000269" key="14">
    <source>
    </source>
</evidence>
<evidence type="ECO:0000269" key="15">
    <source>
    </source>
</evidence>
<evidence type="ECO:0000269" key="16">
    <source>
    </source>
</evidence>
<evidence type="ECO:0000269" key="17">
    <source>
    </source>
</evidence>
<evidence type="ECO:0000305" key="18"/>
<evidence type="ECO:0007744" key="19">
    <source>
        <dbReference type="PDB" id="5K89"/>
    </source>
</evidence>
<evidence type="ECO:0007829" key="20">
    <source>
        <dbReference type="PDB" id="2L0P"/>
    </source>
</evidence>
<evidence type="ECO:0007829" key="21">
    <source>
        <dbReference type="PDB" id="2LHL"/>
    </source>
</evidence>
<evidence type="ECO:0007829" key="22">
    <source>
        <dbReference type="PDB" id="2LUX"/>
    </source>
</evidence>
<evidence type="ECO:0007829" key="23">
    <source>
        <dbReference type="PDB" id="5K89"/>
    </source>
</evidence>
<feature type="chain" id="PRO_0000143961" description="Protein S100-A1">
    <location>
        <begin position="1"/>
        <end position="94"/>
    </location>
</feature>
<feature type="domain" description="EF-hand 1" evidence="18">
    <location>
        <begin position="13"/>
        <end position="48"/>
    </location>
</feature>
<feature type="domain" description="EF-hand 2" evidence="4">
    <location>
        <begin position="50"/>
        <end position="85"/>
    </location>
</feature>
<feature type="binding site" evidence="16 17">
    <location>
        <position position="28"/>
    </location>
    <ligand>
        <name>Ca(2+)</name>
        <dbReference type="ChEBI" id="CHEBI:29108"/>
        <label>1</label>
        <note>low affinity</note>
    </ligand>
</feature>
<feature type="binding site" evidence="16 17">
    <location>
        <position position="33"/>
    </location>
    <ligand>
        <name>Ca(2+)</name>
        <dbReference type="ChEBI" id="CHEBI:29108"/>
        <label>1</label>
        <note>low affinity</note>
    </ligand>
</feature>
<feature type="binding site" evidence="4 16 17">
    <location>
        <position position="63"/>
    </location>
    <ligand>
        <name>Ca(2+)</name>
        <dbReference type="ChEBI" id="CHEBI:29108"/>
        <label>2</label>
        <note>high affinity</note>
    </ligand>
</feature>
<feature type="binding site" evidence="4 16 17">
    <location>
        <position position="65"/>
    </location>
    <ligand>
        <name>Ca(2+)</name>
        <dbReference type="ChEBI" id="CHEBI:29108"/>
        <label>2</label>
        <note>high affinity</note>
    </ligand>
</feature>
<feature type="binding site" evidence="4 16 17">
    <location>
        <position position="67"/>
    </location>
    <ligand>
        <name>Ca(2+)</name>
        <dbReference type="ChEBI" id="CHEBI:29108"/>
        <label>2</label>
        <note>high affinity</note>
    </ligand>
</feature>
<feature type="binding site" evidence="4 16 17">
    <location>
        <position position="69"/>
    </location>
    <ligand>
        <name>Ca(2+)</name>
        <dbReference type="ChEBI" id="CHEBI:29108"/>
        <label>2</label>
        <note>high affinity</note>
    </ligand>
</feature>
<feature type="binding site" evidence="4 16 17">
    <location>
        <position position="74"/>
    </location>
    <ligand>
        <name>Ca(2+)</name>
        <dbReference type="ChEBI" id="CHEBI:29108"/>
        <label>2</label>
        <note>high affinity</note>
    </ligand>
</feature>
<feature type="modified residue" description="S-nitrosocysteine" evidence="15">
    <location>
        <position position="86"/>
    </location>
</feature>
<feature type="helix" evidence="23">
    <location>
        <begin position="4"/>
        <end position="20"/>
    </location>
</feature>
<feature type="strand" evidence="23">
    <location>
        <begin position="22"/>
        <end position="24"/>
    </location>
</feature>
<feature type="strand" evidence="21">
    <location>
        <begin position="26"/>
        <end position="30"/>
    </location>
</feature>
<feature type="helix" evidence="23">
    <location>
        <begin position="31"/>
        <end position="41"/>
    </location>
</feature>
<feature type="helix" evidence="20">
    <location>
        <begin position="45"/>
        <end position="48"/>
    </location>
</feature>
<feature type="helix" evidence="22">
    <location>
        <begin position="50"/>
        <end position="53"/>
    </location>
</feature>
<feature type="helix" evidence="23">
    <location>
        <begin position="54"/>
        <end position="62"/>
    </location>
</feature>
<feature type="strand" evidence="23">
    <location>
        <begin position="67"/>
        <end position="71"/>
    </location>
</feature>
<feature type="helix" evidence="23">
    <location>
        <begin position="72"/>
        <end position="89"/>
    </location>
</feature>
<comment type="function">
    <text evidence="5 7 14 16">Small calcium binding protein that plays important roles in several biological processes such as Ca(2+) homeostasis, chondrocyte biology and cardiomyocyte regulation (PubMed:12804600). In response to an increase in intracellular Ca(2+) levels, binds calcium which triggers conformational changes (PubMed:23351007). These changes allow interactions with specific target proteins and modulate their activity (PubMed:22399290). Regulates a network in cardiomyocytes controlling sarcoplasmic reticulum Ca(2+) cycling and mitochondrial function through interaction with the ryanodine receptors RYR1 and RYR2, sarcoplasmic reticulum Ca(2+)-ATPase/ATP2A2 and mitochondrial F1-ATPase (PubMed:12804600). Facilitates diastolic Ca(2+) dissociation and myofilament mechanics in order to improve relaxation during diastole (PubMed:11717446).</text>
</comment>
<comment type="subunit">
    <text evidence="2 3 6 9 11 12 13 14">Dimer of either two alpha chains, or two beta chains, or one alpha and one beta chain (PubMed:21296671). Also forms heterodimers with S100P (PubMed:15171681). Interacts with AGER (By similarity). Interacts with CAPZA1 (By similarity). Interacts with FKBP4 (PubMed:20188096). Interacts with RYR1 and RYR2 (PubMed:18650434). Interacts with CACYBP in a calcium-dependent manner (PubMed:12042313). Interacts with PPP5C (via TPR repeats); the interaction is calcium-dependent and modulates PPP5C activity (PubMed:22399290). Interacts with ATP2A2 and PLN in a Ca(2+)-dependent manner (PubMed:12804600). Interacts with mitochondrial F1-ATPase subunits ATP5F1A and ATP5F1B; these interactions increase F1-ATPase activity (By similarity).</text>
</comment>
<comment type="interaction">
    <interactant intactId="EBI-743686">
        <id>P23297</id>
    </interactant>
    <interactant intactId="EBI-741753">
        <id>Q00994</id>
        <label>BEX3</label>
    </interactant>
    <organismsDiffer>false</organismsDiffer>
    <experiments>3</experiments>
</comment>
<comment type="interaction">
    <interactant intactId="EBI-743686">
        <id>P23297</id>
    </interactant>
    <interactant intactId="EBI-355586">
        <id>P52907</id>
        <label>CAPZA1</label>
    </interactant>
    <organismsDiffer>false</organismsDiffer>
    <experiments>2</experiments>
</comment>
<comment type="interaction">
    <interactant intactId="EBI-743686">
        <id>P23297</id>
    </interactant>
    <interactant intactId="EBI-389668">
        <id>Q00987</id>
        <label>MDM2</label>
    </interactant>
    <organismsDiffer>false</organismsDiffer>
    <experiments>2</experiments>
</comment>
<comment type="interaction">
    <interactant intactId="EBI-743686">
        <id>P23297</id>
    </interactant>
    <interactant intactId="EBI-398437">
        <id>O15151</id>
        <label>MDM4</label>
    </interactant>
    <organismsDiffer>false</organismsDiffer>
    <experiments>2</experiments>
</comment>
<comment type="interaction">
    <interactant intactId="EBI-743686">
        <id>P23297</id>
    </interactant>
    <interactant intactId="EBI-350338">
        <id>P35579</id>
        <label>MYH9</label>
    </interactant>
    <organismsDiffer>false</organismsDiffer>
    <experiments>3</experiments>
</comment>
<comment type="interaction">
    <interactant intactId="EBI-743686">
        <id>P23297</id>
    </interactant>
    <interactant intactId="EBI-748974">
        <id>Q96CV9</id>
        <label>OPTN</label>
    </interactant>
    <organismsDiffer>false</organismsDiffer>
    <experiments>3</experiments>
</comment>
<comment type="interaction">
    <interactant intactId="EBI-743686">
        <id>P23297</id>
    </interactant>
    <interactant intactId="EBI-742388">
        <id>Q9H8W4</id>
        <label>PLEKHF2</label>
    </interactant>
    <organismsDiffer>false</organismsDiffer>
    <experiments>3</experiments>
</comment>
<comment type="interaction">
    <interactant intactId="EBI-743686">
        <id>P23297</id>
    </interactant>
    <interactant intactId="EBI-743686">
        <id>P23297</id>
        <label>S100A1</label>
    </interactant>
    <organismsDiffer>false</organismsDiffer>
    <experiments>9</experiments>
</comment>
<comment type="interaction">
    <interactant intactId="EBI-743686">
        <id>P23297</id>
    </interactant>
    <interactant intactId="EBI-752230">
        <id>P29034</id>
        <label>S100A2</label>
    </interactant>
    <organismsDiffer>false</organismsDiffer>
    <experiments>7</experiments>
</comment>
<comment type="interaction">
    <interactant intactId="EBI-743686">
        <id>P23297</id>
    </interactant>
    <interactant intactId="EBI-1044747">
        <id>P33764</id>
        <label>S100A3</label>
    </interactant>
    <organismsDiffer>false</organismsDiffer>
    <experiments>3</experiments>
</comment>
<comment type="interaction">
    <interactant intactId="EBI-743686">
        <id>P23297</id>
    </interactant>
    <interactant intactId="EBI-717058">
        <id>P26447</id>
        <label>S100A4</label>
    </interactant>
    <organismsDiffer>false</organismsDiffer>
    <experiments>4</experiments>
</comment>
<comment type="interaction">
    <interactant intactId="EBI-743686">
        <id>P23297</id>
    </interactant>
    <interactant intactId="EBI-458391">
        <id>P04271</id>
        <label>S100B</label>
    </interactant>
    <organismsDiffer>false</organismsDiffer>
    <experiments>25</experiments>
</comment>
<comment type="interaction">
    <interactant intactId="EBI-743686">
        <id>P23297</id>
    </interactant>
    <interactant intactId="EBI-743700">
        <id>P25815</id>
        <label>S100P</label>
    </interactant>
    <organismsDiffer>false</organismsDiffer>
    <experiments>11</experiments>
</comment>
<comment type="interaction">
    <interactant intactId="EBI-743686">
        <id>P23297</id>
    </interactant>
    <interactant intactId="EBI-12198403">
        <id>Q8WXG8</id>
        <label>S100Z</label>
    </interactant>
    <organismsDiffer>false</organismsDiffer>
    <experiments>7</experiments>
</comment>
<comment type="interaction">
    <interactant intactId="EBI-743686">
        <id>P23297</id>
    </interactant>
    <interactant intactId="EBI-2682189">
        <id>P32418</id>
        <label>SLC8A1</label>
    </interactant>
    <organismsDiffer>false</organismsDiffer>
    <experiments>3</experiments>
</comment>
<comment type="interaction">
    <interactant intactId="EBI-743686">
        <id>P23297</id>
    </interactant>
    <interactant intactId="EBI-366083">
        <id>P04637</id>
        <label>TP53</label>
    </interactant>
    <organismsDiffer>false</organismsDiffer>
    <experiments>3</experiments>
</comment>
<comment type="subcellular location">
    <subcellularLocation>
        <location evidence="9">Cytoplasm</location>
    </subcellularLocation>
    <subcellularLocation>
        <location evidence="7">Sarcoplasmic reticulum</location>
    </subcellularLocation>
    <subcellularLocation>
        <location evidence="3">Mitochondrion</location>
    </subcellularLocation>
</comment>
<comment type="tissue specificity">
    <text evidence="7 8">Highly prevalent in heart (PubMed:12804600, PubMed:1384693). Also found in lesser quantities in skeletal muscle and brain (PubMed:1384693).</text>
</comment>
<comment type="PTM">
    <text evidence="10">Glutathionylated; glutathionylation increases affinity to calcium about 10-fold.</text>
</comment>
<comment type="miscellaneous">
    <text evidence="1">Able to bind zinc in vitro; the binding sites are different from the calcium binding sites. The physiological relevance of zinc binding is unclear. Physiological concentrations of potassium antagonize the binding of both divalent cations, especially affecting the high-affinity calcium-binding sites.</text>
</comment>
<comment type="similarity">
    <text evidence="18">Belongs to the S-100 family.</text>
</comment>
<comment type="online information" name="Atlas of Genetics and Cytogenetics in Oncology and Haematology">
    <link uri="https://atlasgeneticsoncology.org/gene/44149/S100A1"/>
</comment>
<name>S10A1_HUMAN</name>
<keyword id="KW-0002">3D-structure</keyword>
<keyword id="KW-0106">Calcium</keyword>
<keyword id="KW-0963">Cytoplasm</keyword>
<keyword id="KW-0318">Glutathionylation</keyword>
<keyword id="KW-0479">Metal-binding</keyword>
<keyword id="KW-0496">Mitochondrion</keyword>
<keyword id="KW-1267">Proteomics identification</keyword>
<keyword id="KW-1185">Reference proteome</keyword>
<keyword id="KW-0677">Repeat</keyword>
<keyword id="KW-0702">S-nitrosylation</keyword>
<keyword id="KW-0703">Sarcoplasmic reticulum</keyword>
<proteinExistence type="evidence at protein level"/>
<protein>
    <recommendedName>
        <fullName>Protein S100-A1</fullName>
    </recommendedName>
    <alternativeName>
        <fullName>S-100 protein alpha chain</fullName>
    </alternativeName>
    <alternativeName>
        <fullName>S-100 protein subunit alpha</fullName>
    </alternativeName>
    <alternativeName>
        <fullName>S100 calcium-binding protein A1</fullName>
    </alternativeName>
</protein>